<name>AFLF_ASPPU</name>
<feature type="chain" id="PRO_0000424160" description="Norsolorinic acid reductase B">
    <location>
        <begin position="1"/>
        <end position="382"/>
    </location>
</feature>
<feature type="active site" description="Proton donor" evidence="3">
    <location>
        <position position="69"/>
    </location>
</feature>
<feature type="binding site" evidence="2">
    <location>
        <position position="64"/>
    </location>
    <ligand>
        <name>NADP(+)</name>
        <dbReference type="ChEBI" id="CHEBI:58349"/>
    </ligand>
</feature>
<feature type="binding site" evidence="3">
    <location>
        <position position="143"/>
    </location>
    <ligand>
        <name>substrate</name>
    </ligand>
</feature>
<feature type="binding site" evidence="2">
    <location>
        <begin position="173"/>
        <end position="174"/>
    </location>
    <ligand>
        <name>NADP(+)</name>
        <dbReference type="ChEBI" id="CHEBI:58349"/>
    </ligand>
</feature>
<feature type="binding site" evidence="2">
    <location>
        <position position="199"/>
    </location>
    <ligand>
        <name>NADP(+)</name>
        <dbReference type="ChEBI" id="CHEBI:58349"/>
    </ligand>
</feature>
<feature type="binding site" evidence="2">
    <location>
        <begin position="228"/>
        <end position="238"/>
    </location>
    <ligand>
        <name>NADP(+)</name>
        <dbReference type="ChEBI" id="CHEBI:58349"/>
    </ligand>
</feature>
<feature type="binding site" evidence="2">
    <location>
        <begin position="302"/>
        <end position="310"/>
    </location>
    <ligand>
        <name>NADP(+)</name>
        <dbReference type="ChEBI" id="CHEBI:58349"/>
    </ligand>
</feature>
<feature type="site" description="Lowers pKa of active site Tyr" evidence="1">
    <location>
        <position position="96"/>
    </location>
</feature>
<organism>
    <name type="scientific">Aspergillus parasiticus (strain ATCC 56775 / NRRL 5862 / SRRC 143 / SU-1)</name>
    <dbReference type="NCBI Taxonomy" id="1403190"/>
    <lineage>
        <taxon>Eukaryota</taxon>
        <taxon>Fungi</taxon>
        <taxon>Dikarya</taxon>
        <taxon>Ascomycota</taxon>
        <taxon>Pezizomycotina</taxon>
        <taxon>Eurotiomycetes</taxon>
        <taxon>Eurotiomycetidae</taxon>
        <taxon>Eurotiales</taxon>
        <taxon>Aspergillaceae</taxon>
        <taxon>Aspergillus</taxon>
        <taxon>Aspergillus subgen. Circumdati</taxon>
    </lineage>
</organism>
<comment type="function">
    <text evidence="7 8">Norsolorinic acid reductase; part of the gene cluster that mediates the biosynthesis of aflatoxins, a group of polyketide-derived furanocoumarins, and part of the most toxic and carcinogenic compounds among the known mycotoxins (PubMed:15006741, PubMed:15094053). The four major aflatoxins produced by A.parasiticus are aflatoxin B1 (AFB1), aflatoxin B2 (AFB2), aflatoxin G1 (AFG1) and aflatoxin G2 (AFG2) (PubMed:15006741). Within the aflatoxin pathway, the norsolorinic acid reductase aflE may play a role in the conversion of norsolorinic acid (NOR) to averantin (AVN) (PubMed:15006741). The biosynthesis of aflatoxins begins with the norsolorinic acid synthase aflC that combines a hexanoyl starter unit produced by the fatty acid synthase aflA/aflB and 7 malonyl-CoA extender units to synthesize the precursor NOR. The second step is the conversion of NOR to averantin and requires the norsolorinic acid ketoreductase aflD, which catalyzes the dehydration of norsolorinic acid to form (1'S)-averantin. The norsolorinic acid reductases aflE and aflF may also play a role in the conversion of NOR to AVN. The cytochrome P450 monooxygenase aflG then catalyzes the hydroxylation of AVN to 5'hydroxyaverantin (HAVN). The next step is performed by the 5'-hydroxyaverantin dehydrogenase aflH that transforms HAVN to 5'-oxoaverantin (OAVN) which is further converted to averufin (AVF) by aflK that plays a dual role in the pathway, as a 5'-oxoaverantin cyclase that mediates conversion of 5'-oxoaverantin, as well as a versicolorin B synthase in a later step in the pathway. The averufin oxidase aflI catalyzes the conversion of AVF to versiconal hemiacetal acetate (VHA). VHA is then the substrate for the versiconal hemiacetal acetate esterase aflJ to yield versiconal (VAL). Versicolorin B synthase aflK then converts VAL to versicolorin B (VERB) by closing the bisfuran ring of aflatoxin which is required for DNA-binding, thus giving to aflatoxin its activity as a mutagen. Then, the activity of the versicolorin B desaturase aflL leads to versicolorin A (VERA). A branch point starts from VERB since it can also be converted to dihydrodemethylsterigmatocystin (DMDHST), probably also by aflL, VERA being a precursor for aflatoxins B1 and G1, and DMDHST for aflatoxins B2 and G2. Next, the versicolorin reductase aflM and the cytochrome P450 monooxygenase aflN are involved in conversion of VERA to demethylsterigmatocystin (DMST). AflX and aflY seem also involved in this step, through probable aflX-mediated epoxide ring-opening step following versicolorin A oxidation and aflY-mediated Baeyer-Villiger oxidation required for the formation of the xanthone ring. The methyltransferase aflO then leads to the modification of DMST to sterigmatocystin (ST), and of DMDHST to dihydrosterigmatocystin (DHST). Both ST and DHST are then substrates of the O-methyltransferase aflP to yield O-methylsterigmatocystin (OMST) and dihydro-O-methylsterigmatocystin (DHOMST), respectively. Finally OMST is converted to aflatoxins B1 and G1, and DHOMST to aflatoxins B2 and G2, via the action of several enzymes including O-methylsterigmatocystin oxidoreductase aflQ, the cytochrome P450 monooxygenase aflU, but also the NADH-dependent flavin oxidoreductase nadA which is specifically required for the synthesis of AFG1 (PubMed:15006741).</text>
</comment>
<comment type="pathway">
    <text evidence="8">Mycotoxin biosynthesis; aflatoxin biosynthesis.</text>
</comment>
<comment type="similarity">
    <text evidence="6">Belongs to the aldo/keto reductase family. Aldo/keto reductase 2 subfamily.</text>
</comment>
<proteinExistence type="inferred from homology"/>
<dbReference type="EC" id="1.1.1.-" evidence="6"/>
<dbReference type="EMBL" id="AY371490">
    <property type="protein sequence ID" value="AAS66007.1"/>
    <property type="molecule type" value="Genomic_DNA"/>
</dbReference>
<dbReference type="EMBL" id="JZEE01000728">
    <property type="protein sequence ID" value="KJK60795.1"/>
    <property type="molecule type" value="Genomic_DNA"/>
</dbReference>
<dbReference type="SMR" id="Q6UEH5"/>
<dbReference type="STRING" id="1403190.Q6UEH5"/>
<dbReference type="OrthoDB" id="48988at2759"/>
<dbReference type="UniPathway" id="UPA00287"/>
<dbReference type="Proteomes" id="UP000033540">
    <property type="component" value="Unassembled WGS sequence"/>
</dbReference>
<dbReference type="GO" id="GO:0016491">
    <property type="term" value="F:oxidoreductase activity"/>
    <property type="evidence" value="ECO:0007669"/>
    <property type="project" value="UniProtKB-KW"/>
</dbReference>
<dbReference type="GO" id="GO:0045122">
    <property type="term" value="P:aflatoxin biosynthetic process"/>
    <property type="evidence" value="ECO:0000304"/>
    <property type="project" value="GO_Central"/>
</dbReference>
<dbReference type="CDD" id="cd19146">
    <property type="entry name" value="AKR_AKR9A1-2"/>
    <property type="match status" value="1"/>
</dbReference>
<dbReference type="Gene3D" id="3.20.20.100">
    <property type="entry name" value="NADP-dependent oxidoreductase domain"/>
    <property type="match status" value="1"/>
</dbReference>
<dbReference type="InterPro" id="IPR050523">
    <property type="entry name" value="AKR_Detox_Biosynth"/>
</dbReference>
<dbReference type="InterPro" id="IPR023210">
    <property type="entry name" value="NADP_OxRdtase_dom"/>
</dbReference>
<dbReference type="InterPro" id="IPR036812">
    <property type="entry name" value="NADP_OxRdtase_dom_sf"/>
</dbReference>
<dbReference type="PANTHER" id="PTHR43364">
    <property type="entry name" value="NADH-SPECIFIC METHYLGLYOXAL REDUCTASE-RELATED"/>
    <property type="match status" value="1"/>
</dbReference>
<dbReference type="PANTHER" id="PTHR43364:SF7">
    <property type="entry name" value="NADP-DEPENDENT OXIDOREDUCTASE DOMAIN-CONTAINING PROTEIN-RELATED"/>
    <property type="match status" value="1"/>
</dbReference>
<dbReference type="Pfam" id="PF00248">
    <property type="entry name" value="Aldo_ket_red"/>
    <property type="match status" value="1"/>
</dbReference>
<dbReference type="SUPFAM" id="SSF51430">
    <property type="entry name" value="NAD(P)-linked oxidoreductase"/>
    <property type="match status" value="1"/>
</dbReference>
<keyword id="KW-0521">NADP</keyword>
<keyword id="KW-0560">Oxidoreductase</keyword>
<keyword id="KW-1185">Reference proteome</keyword>
<evidence type="ECO:0000250" key="1"/>
<evidence type="ECO:0000250" key="2">
    <source>
        <dbReference type="UniProtKB" id="O43488"/>
    </source>
</evidence>
<evidence type="ECO:0000250" key="3">
    <source>
        <dbReference type="UniProtKB" id="Q8CG76"/>
    </source>
</evidence>
<evidence type="ECO:0000303" key="4">
    <source>
    </source>
</evidence>
<evidence type="ECO:0000303" key="5">
    <source>
    </source>
</evidence>
<evidence type="ECO:0000305" key="6"/>
<evidence type="ECO:0000305" key="7">
    <source>
    </source>
</evidence>
<evidence type="ECO:0000305" key="8">
    <source>
    </source>
</evidence>
<accession>Q6UEH5</accession>
<accession>A0A0F0HZ86</accession>
<reference key="1">
    <citation type="journal article" date="2004" name="FEBS Lett.">
        <title>Completed sequence of aflatoxin pathway gene cluster in Aspergillus parasiticus.</title>
        <authorList>
            <person name="Yu J."/>
            <person name="Bhatnagar D."/>
            <person name="Cleveland T.E."/>
        </authorList>
    </citation>
    <scope>NUCLEOTIDE SEQUENCE [GENOMIC DNA]</scope>
    <scope>FUNCTION</scope>
    <scope>PATHWAY</scope>
    <source>
        <strain>ATCC 56775 / NRRL 5862 / SRRC 143 / SU-1</strain>
    </source>
</reference>
<reference key="2">
    <citation type="submission" date="2015-02" db="EMBL/GenBank/DDBJ databases">
        <title>Draft genome sequence of Aspergillus parasiticus SU-1.</title>
        <authorList>
            <person name="Yu J."/>
            <person name="Fedorova N."/>
            <person name="Yin Y."/>
            <person name="Losada L."/>
            <person name="Zafar N."/>
            <person name="Taujale R."/>
            <person name="Ehrlich K.C."/>
            <person name="Bhatnagar D."/>
            <person name="Cleveland T.E."/>
            <person name="Bennett J.W."/>
            <person name="Nierman W.C."/>
        </authorList>
    </citation>
    <scope>NUCLEOTIDE SEQUENCE [LARGE SCALE GENOMIC DNA]</scope>
    <source>
        <strain>ATCC 56775 / NRRL 5862 / SRRC 143 / SU-1</strain>
    </source>
</reference>
<reference key="3">
    <citation type="journal article" date="2004" name="Appl. Environ. Microbiol.">
        <title>Clustered pathway genes in aflatoxin biosynthesis.</title>
        <authorList>
            <person name="Yu J."/>
            <person name="Chang P.K."/>
            <person name="Ehrlich K.C."/>
            <person name="Cary J.W."/>
            <person name="Bhatnagar D."/>
            <person name="Cleveland T.E."/>
            <person name="Payne G.A."/>
            <person name="Linz J.E."/>
            <person name="Woloshuk C.P."/>
            <person name="Bennett J.W."/>
        </authorList>
    </citation>
    <scope>FUNCTION</scope>
    <scope>PATHWAY</scope>
    <scope>NOMENCLATURE</scope>
</reference>
<protein>
    <recommendedName>
        <fullName evidence="5">Norsolorinic acid reductase B</fullName>
        <ecNumber evidence="6">1.1.1.-</ecNumber>
    </recommendedName>
    <alternativeName>
        <fullName evidence="4">Aflatoxin biosynthesis protein F</fullName>
    </alternativeName>
</protein>
<sequence>MSTSAPLLSRYRQLSPAASIRVSPLCLGAMTFGVSDGEMFGECSKEMAFAILDHFYQQGGNFIDTANGYRAGESEMWLGEWMASRKNRDDIVLATKYAAGYRGHEKNRIQVNYGGTGTKSMRLSVDASLQKLQTSYIDLLYVHWWDYTVSIPELMHALNDLVASGKVHYLGISDSPAWVVSKANQYARDHGLRQFVVYQGLWNAAKRDLERDILPMCLDEGMGLCPYGVLNQGRFRTEEGFRDRDQTNNAGGRNIIPLSEHDRSVSRVLDIVATSKGVPLLQVALAYVMQKAPYVFPIVGVRKVDHLTGVEPAVHISLTDEEVNAIENAYEFDPGFPHTFLSGSMFAQGPPKGGYSPDVVWWTKMLGTFDWVEGAKPIRPQP</sequence>
<gene>
    <name evidence="4" type="primary">aflF</name>
    <name evidence="5" type="synonym">norB</name>
    <name type="ORF">P875_00052992</name>
</gene>